<evidence type="ECO:0000255" key="1"/>
<evidence type="ECO:0000269" key="2">
    <source>
    </source>
</evidence>
<evidence type="ECO:0000303" key="3">
    <source>
    </source>
</evidence>
<evidence type="ECO:0000305" key="4">
    <source>
    </source>
</evidence>
<evidence type="ECO:0000312" key="5">
    <source>
        <dbReference type="EMBL" id="ACA09639.1"/>
    </source>
</evidence>
<dbReference type="EMBL" id="EU311549">
    <property type="protein sequence ID" value="ACA09639.1"/>
    <property type="molecule type" value="mRNA"/>
</dbReference>
<dbReference type="GO" id="GO:0005576">
    <property type="term" value="C:extracellular region"/>
    <property type="evidence" value="ECO:0007669"/>
    <property type="project" value="UniProtKB-SubCell"/>
</dbReference>
<dbReference type="GO" id="GO:0042742">
    <property type="term" value="P:defense response to bacterium"/>
    <property type="evidence" value="ECO:0007669"/>
    <property type="project" value="UniProtKB-KW"/>
</dbReference>
<dbReference type="GO" id="GO:0050832">
    <property type="term" value="P:defense response to fungus"/>
    <property type="evidence" value="ECO:0007669"/>
    <property type="project" value="UniProtKB-KW"/>
</dbReference>
<dbReference type="GO" id="GO:0045087">
    <property type="term" value="P:innate immune response"/>
    <property type="evidence" value="ECO:0007669"/>
    <property type="project" value="UniProtKB-KW"/>
</dbReference>
<dbReference type="GO" id="GO:0031640">
    <property type="term" value="P:killing of cells of another organism"/>
    <property type="evidence" value="ECO:0007669"/>
    <property type="project" value="UniProtKB-KW"/>
</dbReference>
<dbReference type="InterPro" id="IPR004275">
    <property type="entry name" value="Frog_antimicrobial_propeptide"/>
</dbReference>
<dbReference type="Pfam" id="PF03032">
    <property type="entry name" value="FSAP_sig_propep"/>
    <property type="match status" value="1"/>
</dbReference>
<reference key="1">
    <citation type="journal article" date="2010" name="Comp. Biochem. Physiol.">
        <title>Five novel antimicrobial peptides from skin secretions of the frog, Amolops loloensis.</title>
        <authorList>
            <person name="Wang M."/>
            <person name="Wang Y."/>
            <person name="Wang A."/>
            <person name="Song Y."/>
            <person name="Ma D."/>
            <person name="Yang H."/>
            <person name="Ma Y."/>
            <person name="Lai R."/>
        </authorList>
    </citation>
    <scope>NUCLEOTIDE SEQUENCE [MRNA]</scope>
    <scope>PROTEIN SEQUENCE OF 47-62</scope>
    <scope>FUNCTION</scope>
    <scope>MASS SPECTROMETRY</scope>
    <scope>AMIDATION AT LEU-62</scope>
    <scope>SUBCELLULAR LOCATION</scope>
    <source>
        <tissue>Skin</tissue>
        <tissue>Skin secretion</tissue>
    </source>
</reference>
<feature type="signal peptide" evidence="1">
    <location>
        <begin position="1"/>
        <end position="22"/>
    </location>
</feature>
<feature type="propeptide" id="PRO_0000450003" evidence="4">
    <location>
        <begin position="23"/>
        <end position="46"/>
    </location>
</feature>
<feature type="peptide" id="PRO_5002952318" description="Temporin-ALd" evidence="2">
    <location>
        <begin position="47"/>
        <end position="62"/>
    </location>
</feature>
<feature type="modified residue" description="Leucine amide" evidence="2">
    <location>
        <position position="62"/>
    </location>
</feature>
<keyword id="KW-0027">Amidation</keyword>
<keyword id="KW-0878">Amphibian defense peptide</keyword>
<keyword id="KW-0044">Antibiotic</keyword>
<keyword id="KW-0929">Antimicrobial</keyword>
<keyword id="KW-0165">Cleavage on pair of basic residues</keyword>
<keyword id="KW-0903">Direct protein sequencing</keyword>
<keyword id="KW-0295">Fungicide</keyword>
<keyword id="KW-0391">Immunity</keyword>
<keyword id="KW-0399">Innate immunity</keyword>
<keyword id="KW-0964">Secreted</keyword>
<keyword id="KW-0732">Signal</keyword>
<comment type="function">
    <text evidence="2">Antimicrobial peptide with activity against Gram-positive and Gram-negative bacteria and against fungi (PubMed:19843479). Has been tested against S.aureus (MIC=1.25 ug/mL), B.pumilus (MIC=2.5 ug/mL), B.cereus (MIC=15.0 ug/mL), E.coli (MIC=1.25 ug/mL), B.dysenteriae (MIC=5.0 ug/mL), A.cacoaceticus (MIC=15.0 ug/mL), P.aeruginosa (MIC=5.0 ug/mL) and C.albicans (MIC=1.25 ug/mL) (PubMed:19843479). Also shows a weak hemolytic activity (PubMed:19843479).</text>
</comment>
<comment type="subcellular location">
    <subcellularLocation>
        <location evidence="2">Secreted</location>
    </subcellularLocation>
</comment>
<comment type="tissue specificity">
    <text evidence="4">Expressed by the skin glands.</text>
</comment>
<comment type="mass spectrometry" mass="1596.72" method="MALDI" evidence="2"/>
<comment type="similarity">
    <text evidence="1">Belongs to the frog skin active peptide (FSAP) family. Temporin subfamily.</text>
</comment>
<comment type="online information" name="The antimicrobial peptide database">
    <link uri="https://wangapd3.com/database/query_output.php?ID=01931"/>
</comment>
<accession>C5H0D6</accession>
<name>TPD_AMOLO</name>
<organism>
    <name type="scientific">Amolops loloensis</name>
    <name type="common">Lolokou Sucker Frog</name>
    <name type="synonym">Staurois loloensis</name>
    <dbReference type="NCBI Taxonomy" id="318551"/>
    <lineage>
        <taxon>Eukaryota</taxon>
        <taxon>Metazoa</taxon>
        <taxon>Chordata</taxon>
        <taxon>Craniata</taxon>
        <taxon>Vertebrata</taxon>
        <taxon>Euteleostomi</taxon>
        <taxon>Amphibia</taxon>
        <taxon>Batrachia</taxon>
        <taxon>Anura</taxon>
        <taxon>Neobatrachia</taxon>
        <taxon>Ranoidea</taxon>
        <taxon>Ranidae</taxon>
        <taxon>Amolops</taxon>
    </lineage>
</organism>
<proteinExistence type="evidence at protein level"/>
<sequence length="64" mass="7278">MFTMKKSLLLLFFLGTIHLSLCEQERNAEEERRDDLGERQAEVEKRFLPIAGKLLSGLSGLLGK</sequence>
<protein>
    <recommendedName>
        <fullName evidence="3">Temporin-ALd</fullName>
    </recommendedName>
    <alternativeName>
        <fullName evidence="5">Amolopin-2e</fullName>
    </alternativeName>
</protein>